<organism>
    <name type="scientific">Paraburkholderia phytofirmans (strain DSM 17436 / LMG 22146 / PsJN)</name>
    <name type="common">Burkholderia phytofirmans</name>
    <dbReference type="NCBI Taxonomy" id="398527"/>
    <lineage>
        <taxon>Bacteria</taxon>
        <taxon>Pseudomonadati</taxon>
        <taxon>Pseudomonadota</taxon>
        <taxon>Betaproteobacteria</taxon>
        <taxon>Burkholderiales</taxon>
        <taxon>Burkholderiaceae</taxon>
        <taxon>Paraburkholderia</taxon>
    </lineage>
</organism>
<feature type="chain" id="PRO_1000101104" description="Lysine--tRNA ligase">
    <location>
        <begin position="1"/>
        <end position="518"/>
    </location>
</feature>
<feature type="region of interest" description="Disordered" evidence="2">
    <location>
        <begin position="1"/>
        <end position="28"/>
    </location>
</feature>
<feature type="binding site" evidence="1">
    <location>
        <position position="428"/>
    </location>
    <ligand>
        <name>Mg(2+)</name>
        <dbReference type="ChEBI" id="CHEBI:18420"/>
        <label>1</label>
    </ligand>
</feature>
<feature type="binding site" evidence="1">
    <location>
        <position position="435"/>
    </location>
    <ligand>
        <name>Mg(2+)</name>
        <dbReference type="ChEBI" id="CHEBI:18420"/>
        <label>1</label>
    </ligand>
</feature>
<feature type="binding site" evidence="1">
    <location>
        <position position="435"/>
    </location>
    <ligand>
        <name>Mg(2+)</name>
        <dbReference type="ChEBI" id="CHEBI:18420"/>
        <label>2</label>
    </ligand>
</feature>
<name>SYK_PARPJ</name>
<accession>B2SXV7</accession>
<comment type="catalytic activity">
    <reaction evidence="1">
        <text>tRNA(Lys) + L-lysine + ATP = L-lysyl-tRNA(Lys) + AMP + diphosphate</text>
        <dbReference type="Rhea" id="RHEA:20792"/>
        <dbReference type="Rhea" id="RHEA-COMP:9696"/>
        <dbReference type="Rhea" id="RHEA-COMP:9697"/>
        <dbReference type="ChEBI" id="CHEBI:30616"/>
        <dbReference type="ChEBI" id="CHEBI:32551"/>
        <dbReference type="ChEBI" id="CHEBI:33019"/>
        <dbReference type="ChEBI" id="CHEBI:78442"/>
        <dbReference type="ChEBI" id="CHEBI:78529"/>
        <dbReference type="ChEBI" id="CHEBI:456215"/>
        <dbReference type="EC" id="6.1.1.6"/>
    </reaction>
</comment>
<comment type="cofactor">
    <cofactor evidence="1">
        <name>Mg(2+)</name>
        <dbReference type="ChEBI" id="CHEBI:18420"/>
    </cofactor>
    <text evidence="1">Binds 3 Mg(2+) ions per subunit.</text>
</comment>
<comment type="subunit">
    <text evidence="1">Homodimer.</text>
</comment>
<comment type="subcellular location">
    <subcellularLocation>
        <location evidence="1">Cytoplasm</location>
    </subcellularLocation>
</comment>
<comment type="similarity">
    <text evidence="1">Belongs to the class-II aminoacyl-tRNA synthetase family.</text>
</comment>
<dbReference type="EC" id="6.1.1.6" evidence="1"/>
<dbReference type="EMBL" id="CP001052">
    <property type="protein sequence ID" value="ACD16966.1"/>
    <property type="molecule type" value="Genomic_DNA"/>
</dbReference>
<dbReference type="RefSeq" id="WP_012433560.1">
    <property type="nucleotide sequence ID" value="NC_010681.1"/>
</dbReference>
<dbReference type="SMR" id="B2SXV7"/>
<dbReference type="STRING" id="398527.Bphyt_2571"/>
<dbReference type="KEGG" id="bpy:Bphyt_2571"/>
<dbReference type="eggNOG" id="COG1190">
    <property type="taxonomic scope" value="Bacteria"/>
</dbReference>
<dbReference type="HOGENOM" id="CLU_008255_6_0_4"/>
<dbReference type="OrthoDB" id="9801152at2"/>
<dbReference type="Proteomes" id="UP000001739">
    <property type="component" value="Chromosome 1"/>
</dbReference>
<dbReference type="GO" id="GO:0005829">
    <property type="term" value="C:cytosol"/>
    <property type="evidence" value="ECO:0007669"/>
    <property type="project" value="TreeGrafter"/>
</dbReference>
<dbReference type="GO" id="GO:0005524">
    <property type="term" value="F:ATP binding"/>
    <property type="evidence" value="ECO:0007669"/>
    <property type="project" value="UniProtKB-UniRule"/>
</dbReference>
<dbReference type="GO" id="GO:0004824">
    <property type="term" value="F:lysine-tRNA ligase activity"/>
    <property type="evidence" value="ECO:0007669"/>
    <property type="project" value="UniProtKB-UniRule"/>
</dbReference>
<dbReference type="GO" id="GO:0000287">
    <property type="term" value="F:magnesium ion binding"/>
    <property type="evidence" value="ECO:0007669"/>
    <property type="project" value="UniProtKB-UniRule"/>
</dbReference>
<dbReference type="GO" id="GO:0000049">
    <property type="term" value="F:tRNA binding"/>
    <property type="evidence" value="ECO:0007669"/>
    <property type="project" value="TreeGrafter"/>
</dbReference>
<dbReference type="GO" id="GO:0006430">
    <property type="term" value="P:lysyl-tRNA aminoacylation"/>
    <property type="evidence" value="ECO:0007669"/>
    <property type="project" value="UniProtKB-UniRule"/>
</dbReference>
<dbReference type="CDD" id="cd00775">
    <property type="entry name" value="LysRS_core"/>
    <property type="match status" value="1"/>
</dbReference>
<dbReference type="CDD" id="cd04322">
    <property type="entry name" value="LysRS_N"/>
    <property type="match status" value="1"/>
</dbReference>
<dbReference type="FunFam" id="2.40.50.140:FF:000024">
    <property type="entry name" value="Lysine--tRNA ligase"/>
    <property type="match status" value="1"/>
</dbReference>
<dbReference type="FunFam" id="3.30.930.10:FF:000001">
    <property type="entry name" value="Lysine--tRNA ligase"/>
    <property type="match status" value="1"/>
</dbReference>
<dbReference type="Gene3D" id="3.30.930.10">
    <property type="entry name" value="Bira Bifunctional Protein, Domain 2"/>
    <property type="match status" value="1"/>
</dbReference>
<dbReference type="Gene3D" id="2.40.50.140">
    <property type="entry name" value="Nucleic acid-binding proteins"/>
    <property type="match status" value="1"/>
</dbReference>
<dbReference type="HAMAP" id="MF_00252">
    <property type="entry name" value="Lys_tRNA_synth_class2"/>
    <property type="match status" value="1"/>
</dbReference>
<dbReference type="InterPro" id="IPR004364">
    <property type="entry name" value="Aa-tRNA-synt_II"/>
</dbReference>
<dbReference type="InterPro" id="IPR006195">
    <property type="entry name" value="aa-tRNA-synth_II"/>
</dbReference>
<dbReference type="InterPro" id="IPR045864">
    <property type="entry name" value="aa-tRNA-synth_II/BPL/LPL"/>
</dbReference>
<dbReference type="InterPro" id="IPR002313">
    <property type="entry name" value="Lys-tRNA-ligase_II"/>
</dbReference>
<dbReference type="InterPro" id="IPR044136">
    <property type="entry name" value="Lys-tRNA-ligase_II_N"/>
</dbReference>
<dbReference type="InterPro" id="IPR018149">
    <property type="entry name" value="Lys-tRNA-synth_II_C"/>
</dbReference>
<dbReference type="InterPro" id="IPR012340">
    <property type="entry name" value="NA-bd_OB-fold"/>
</dbReference>
<dbReference type="InterPro" id="IPR004365">
    <property type="entry name" value="NA-bd_OB_tRNA"/>
</dbReference>
<dbReference type="NCBIfam" id="TIGR00499">
    <property type="entry name" value="lysS_bact"/>
    <property type="match status" value="1"/>
</dbReference>
<dbReference type="NCBIfam" id="NF001756">
    <property type="entry name" value="PRK00484.1"/>
    <property type="match status" value="1"/>
</dbReference>
<dbReference type="PANTHER" id="PTHR42918:SF15">
    <property type="entry name" value="LYSINE--TRNA LIGASE, CHLOROPLASTIC_MITOCHONDRIAL"/>
    <property type="match status" value="1"/>
</dbReference>
<dbReference type="PANTHER" id="PTHR42918">
    <property type="entry name" value="LYSYL-TRNA SYNTHETASE"/>
    <property type="match status" value="1"/>
</dbReference>
<dbReference type="Pfam" id="PF00152">
    <property type="entry name" value="tRNA-synt_2"/>
    <property type="match status" value="1"/>
</dbReference>
<dbReference type="Pfam" id="PF01336">
    <property type="entry name" value="tRNA_anti-codon"/>
    <property type="match status" value="1"/>
</dbReference>
<dbReference type="PRINTS" id="PR00982">
    <property type="entry name" value="TRNASYNTHLYS"/>
</dbReference>
<dbReference type="SUPFAM" id="SSF55681">
    <property type="entry name" value="Class II aaRS and biotin synthetases"/>
    <property type="match status" value="1"/>
</dbReference>
<dbReference type="SUPFAM" id="SSF50249">
    <property type="entry name" value="Nucleic acid-binding proteins"/>
    <property type="match status" value="1"/>
</dbReference>
<dbReference type="PROSITE" id="PS50862">
    <property type="entry name" value="AA_TRNA_LIGASE_II"/>
    <property type="match status" value="1"/>
</dbReference>
<gene>
    <name evidence="1" type="primary">lysS</name>
    <name type="ordered locus">Bphyt_2571</name>
</gene>
<evidence type="ECO:0000255" key="1">
    <source>
        <dbReference type="HAMAP-Rule" id="MF_00252"/>
    </source>
</evidence>
<evidence type="ECO:0000256" key="2">
    <source>
        <dbReference type="SAM" id="MobiDB-lite"/>
    </source>
</evidence>
<proteinExistence type="inferred from homology"/>
<reference key="1">
    <citation type="journal article" date="2011" name="J. Bacteriol.">
        <title>Complete genome sequence of the plant growth-promoting endophyte Burkholderia phytofirmans strain PsJN.</title>
        <authorList>
            <person name="Weilharter A."/>
            <person name="Mitter B."/>
            <person name="Shin M.V."/>
            <person name="Chain P.S."/>
            <person name="Nowak J."/>
            <person name="Sessitsch A."/>
        </authorList>
    </citation>
    <scope>NUCLEOTIDE SEQUENCE [LARGE SCALE GENOMIC DNA]</scope>
    <source>
        <strain>DSM 17436 / LMG 22146 / PsJN</strain>
    </source>
</reference>
<protein>
    <recommendedName>
        <fullName evidence="1">Lysine--tRNA ligase</fullName>
        <ecNumber evidence="1">6.1.1.6</ecNumber>
    </recommendedName>
    <alternativeName>
        <fullName evidence="1">Lysyl-tRNA synthetase</fullName>
        <shortName evidence="1">LysRS</shortName>
    </alternativeName>
</protein>
<sequence>MTEPTQPNAAQPDAARPNVAPEMDDNKIMTERREKLRELREQGVAYPNDFRPTHHAEDLQSQYEQSDKEALEANPLEVAIAGRMMLKRVMGKASFATVRDGSGQIQFFITPTDVGQETYDAFKKWDMGDIVAARGVLFRTNKGELSVRCTELRLLSKSLRPLPDKFHGLADQEMKYRQRYVDLIVTPETRKTFVARTKAISSIRKFMAEADFMEVETPMLHPIPGGAAAKPFTTHHNALDMQMFLRIAPELYLKRLVVGGFERVFEINRNFRNEGVSVRHNPEFTMIEFYAAYTDYKWLMDFTEQLIRQAAIDALGTATITYQGRELDLAKPFHRLTITQAIQKYAPQYTNEQLADSAFLRTELKKFGVDASQPQFLNAGVGSLQLALFEETAESQLWEPTYIIDYPIEVSPLARASDKVAGITERFELFITGREIANGFSELNDPEDQAARFKKQVDQKEAGDEEAMFYDADYIRALEYGMPPAGGCGIGIDRLVMMLTDSPSIRDVILFPHLRRED</sequence>
<keyword id="KW-0030">Aminoacyl-tRNA synthetase</keyword>
<keyword id="KW-0067">ATP-binding</keyword>
<keyword id="KW-0963">Cytoplasm</keyword>
<keyword id="KW-0436">Ligase</keyword>
<keyword id="KW-0460">Magnesium</keyword>
<keyword id="KW-0479">Metal-binding</keyword>
<keyword id="KW-0547">Nucleotide-binding</keyword>
<keyword id="KW-0648">Protein biosynthesis</keyword>